<reference key="1">
    <citation type="journal article" date="2003" name="Science">
        <title>Role of mobile DNA in the evolution of vancomycin-resistant Enterococcus faecalis.</title>
        <authorList>
            <person name="Paulsen I.T."/>
            <person name="Banerjei L."/>
            <person name="Myers G.S.A."/>
            <person name="Nelson K.E."/>
            <person name="Seshadri R."/>
            <person name="Read T.D."/>
            <person name="Fouts D.E."/>
            <person name="Eisen J.A."/>
            <person name="Gill S.R."/>
            <person name="Heidelberg J.F."/>
            <person name="Tettelin H."/>
            <person name="Dodson R.J."/>
            <person name="Umayam L.A."/>
            <person name="Brinkac L.M."/>
            <person name="Beanan M.J."/>
            <person name="Daugherty S.C."/>
            <person name="DeBoy R.T."/>
            <person name="Durkin S.A."/>
            <person name="Kolonay J.F."/>
            <person name="Madupu R."/>
            <person name="Nelson W.C."/>
            <person name="Vamathevan J.J."/>
            <person name="Tran B."/>
            <person name="Upton J."/>
            <person name="Hansen T."/>
            <person name="Shetty J."/>
            <person name="Khouri H.M."/>
            <person name="Utterback T.R."/>
            <person name="Radune D."/>
            <person name="Ketchum K.A."/>
            <person name="Dougherty B.A."/>
            <person name="Fraser C.M."/>
        </authorList>
    </citation>
    <scope>NUCLEOTIDE SEQUENCE [LARGE SCALE GENOMIC DNA]</scope>
    <source>
        <strain>ATCC 700802 / V583</strain>
    </source>
</reference>
<accession>Q836H7</accession>
<feature type="chain" id="PRO_0000376753" description="N-acetyldiaminopimelate deacetylase">
    <location>
        <begin position="1"/>
        <end position="378"/>
    </location>
</feature>
<feature type="active site" evidence="1">
    <location>
        <position position="72"/>
    </location>
</feature>
<feature type="active site" description="Proton acceptor" evidence="1">
    <location>
        <position position="131"/>
    </location>
</feature>
<keyword id="KW-0028">Amino-acid biosynthesis</keyword>
<keyword id="KW-0220">Diaminopimelate biosynthesis</keyword>
<keyword id="KW-0378">Hydrolase</keyword>
<keyword id="KW-0457">Lysine biosynthesis</keyword>
<keyword id="KW-1185">Reference proteome</keyword>
<dbReference type="EC" id="3.5.1.47" evidence="1"/>
<dbReference type="EMBL" id="AE016830">
    <property type="protein sequence ID" value="AAO80934.1"/>
    <property type="status" value="ALT_INIT"/>
    <property type="molecule type" value="Genomic_DNA"/>
</dbReference>
<dbReference type="RefSeq" id="NP_814864.1">
    <property type="nucleotide sequence ID" value="NC_004668.1"/>
</dbReference>
<dbReference type="SMR" id="Q836H7"/>
<dbReference type="STRING" id="226185.EF_1134"/>
<dbReference type="EnsemblBacteria" id="AAO80934">
    <property type="protein sequence ID" value="AAO80934"/>
    <property type="gene ID" value="EF_1134"/>
</dbReference>
<dbReference type="KEGG" id="efa:EF1134"/>
<dbReference type="PATRIC" id="fig|226185.9.peg.1060"/>
<dbReference type="eggNOG" id="COG1473">
    <property type="taxonomic scope" value="Bacteria"/>
</dbReference>
<dbReference type="HOGENOM" id="CLU_023257_0_1_9"/>
<dbReference type="UniPathway" id="UPA00034">
    <property type="reaction ID" value="UER00024"/>
</dbReference>
<dbReference type="Proteomes" id="UP000001415">
    <property type="component" value="Chromosome"/>
</dbReference>
<dbReference type="GO" id="GO:0050118">
    <property type="term" value="F:N-acetyldiaminopimelate deacetylase activity"/>
    <property type="evidence" value="ECO:0007669"/>
    <property type="project" value="UniProtKB-UniRule"/>
</dbReference>
<dbReference type="GO" id="GO:0019877">
    <property type="term" value="P:diaminopimelate biosynthetic process"/>
    <property type="evidence" value="ECO:0007669"/>
    <property type="project" value="UniProtKB-UniRule"/>
</dbReference>
<dbReference type="GO" id="GO:0009089">
    <property type="term" value="P:lysine biosynthetic process via diaminopimelate"/>
    <property type="evidence" value="ECO:0007669"/>
    <property type="project" value="UniProtKB-UniRule"/>
</dbReference>
<dbReference type="CDD" id="cd05670">
    <property type="entry name" value="M20_Acy1_YkuR-like"/>
    <property type="match status" value="1"/>
</dbReference>
<dbReference type="FunFam" id="3.30.70.360:FF:000001">
    <property type="entry name" value="N-acetyldiaminopimelate deacetylase"/>
    <property type="match status" value="1"/>
</dbReference>
<dbReference type="Gene3D" id="3.30.70.360">
    <property type="match status" value="1"/>
</dbReference>
<dbReference type="Gene3D" id="3.40.630.10">
    <property type="entry name" value="Zn peptidases"/>
    <property type="match status" value="1"/>
</dbReference>
<dbReference type="HAMAP" id="MF_01692">
    <property type="entry name" value="DapEL"/>
    <property type="match status" value="1"/>
</dbReference>
<dbReference type="InterPro" id="IPR023905">
    <property type="entry name" value="AcetylDAP_deacetylase"/>
</dbReference>
<dbReference type="InterPro" id="IPR017439">
    <property type="entry name" value="Amidohydrolase"/>
</dbReference>
<dbReference type="InterPro" id="IPR036264">
    <property type="entry name" value="Bact_exopeptidase_dim_dom"/>
</dbReference>
<dbReference type="InterPro" id="IPR002933">
    <property type="entry name" value="Peptidase_M20"/>
</dbReference>
<dbReference type="InterPro" id="IPR011650">
    <property type="entry name" value="Peptidase_M20_dimer"/>
</dbReference>
<dbReference type="NCBIfam" id="TIGR01891">
    <property type="entry name" value="amidohydrolases"/>
    <property type="match status" value="1"/>
</dbReference>
<dbReference type="PANTHER" id="PTHR11014:SF98">
    <property type="entry name" value="N-ACETYLDIAMINOPIMELATE DEACETYLASE"/>
    <property type="match status" value="1"/>
</dbReference>
<dbReference type="PANTHER" id="PTHR11014">
    <property type="entry name" value="PEPTIDASE M20 FAMILY MEMBER"/>
    <property type="match status" value="1"/>
</dbReference>
<dbReference type="Pfam" id="PF07687">
    <property type="entry name" value="M20_dimer"/>
    <property type="match status" value="1"/>
</dbReference>
<dbReference type="Pfam" id="PF01546">
    <property type="entry name" value="Peptidase_M20"/>
    <property type="match status" value="1"/>
</dbReference>
<dbReference type="PIRSF" id="PIRSF005962">
    <property type="entry name" value="Pept_M20D_amidohydro"/>
    <property type="match status" value="1"/>
</dbReference>
<dbReference type="SUPFAM" id="SSF55031">
    <property type="entry name" value="Bacterial exopeptidase dimerisation domain"/>
    <property type="match status" value="1"/>
</dbReference>
<dbReference type="SUPFAM" id="SSF53187">
    <property type="entry name" value="Zn-dependent exopeptidases"/>
    <property type="match status" value="1"/>
</dbReference>
<name>DAPEL_ENTFA</name>
<gene>
    <name type="ordered locus">EF_1134</name>
</gene>
<comment type="function">
    <text evidence="1">Catalyzes the conversion of N-acetyl-diaminopimelate to diaminopimelate and acetate.</text>
</comment>
<comment type="catalytic activity">
    <reaction evidence="1">
        <text>N-acetyl-(2S,6S)-2,6-diaminopimelate + H2O = (2S,6S)-2,6-diaminopimelate + acetate</text>
        <dbReference type="Rhea" id="RHEA:20405"/>
        <dbReference type="ChEBI" id="CHEBI:15377"/>
        <dbReference type="ChEBI" id="CHEBI:30089"/>
        <dbReference type="ChEBI" id="CHEBI:57609"/>
        <dbReference type="ChEBI" id="CHEBI:58767"/>
        <dbReference type="EC" id="3.5.1.47"/>
    </reaction>
</comment>
<comment type="pathway">
    <text evidence="1">Amino-acid biosynthesis; L-lysine biosynthesis via DAP pathway; LL-2,6-diaminopimelate from (S)-tetrahydrodipicolinate (acetylase route): step 3/3.</text>
</comment>
<comment type="similarity">
    <text evidence="1">Belongs to the peptidase M20A family. N-acetyldiaminopimelate deacetylase subfamily.</text>
</comment>
<comment type="sequence caution" evidence="2">
    <conflict type="erroneous initiation">
        <sequence resource="EMBL-CDS" id="AAO80934"/>
    </conflict>
    <text>Extended N-terminus.</text>
</comment>
<sequence length="378" mass="41852">MAFVEQEELIAIRRQLHQIPEIGLEEKETQAFLLNEIDKMKQPYLQVRTWQTGILVFIEGKNPQKTIGWRADIDGLPIQEEVVSAFQSKRPGFMHACGHDFHMTIGLGVLKELSQQQPDNNFLFLFQPAEENEAGGMLMYEDHAFGEWLPDEFYALHVNPDLPVGTISTRVGTLFAATCEVNITLKGKGGHAAFPHQANDMVLAATNLIQQAQTIVSRNVDPVVGAVVTFGTFHAGTACNVIAEEATLSGTIRTLTAETNEQTQRRIREISEGIAQSFQCEVTVHLDQKGYLPVVNEPACTTNFIEYMSKQATVQFQQAPVAMTGEDFGYLLSKVPGTMFWLGVASPYSLHSAKFEPNEEALLFGVEAVSGFLKSLDN</sequence>
<proteinExistence type="inferred from homology"/>
<evidence type="ECO:0000255" key="1">
    <source>
        <dbReference type="HAMAP-Rule" id="MF_01692"/>
    </source>
</evidence>
<evidence type="ECO:0000305" key="2"/>
<organism>
    <name type="scientific">Enterococcus faecalis (strain ATCC 700802 / V583)</name>
    <dbReference type="NCBI Taxonomy" id="226185"/>
    <lineage>
        <taxon>Bacteria</taxon>
        <taxon>Bacillati</taxon>
        <taxon>Bacillota</taxon>
        <taxon>Bacilli</taxon>
        <taxon>Lactobacillales</taxon>
        <taxon>Enterococcaceae</taxon>
        <taxon>Enterococcus</taxon>
    </lineage>
</organism>
<protein>
    <recommendedName>
        <fullName evidence="1">N-acetyldiaminopimelate deacetylase</fullName>
        <ecNumber evidence="1">3.5.1.47</ecNumber>
    </recommendedName>
</protein>